<sequence>MTDSNDDKTLSVTGKKTLTLKPSGMSQGTVRQDMGRGRTKAVVVETRKRRPMRPEDEKPITPATPAAPVRAAEPAPAPAQARPQQSTPAPRIHQPGGQANQRPQQSYQPPRANDRPRPVVLNHLSPEEMDARRRALAESQARDAQDAIRRAEEEKRRAAEEAVRKAAEAEEAARRAVEEAARQAEAAAAAAAEPAVTAPAPAPVTAEARPNTSPRPAAPAPAARRPDADGAAARPAPGAPAAVRGRRNDGDDDDRGASRGGPARGRVVRPEPAKPVTTRPKTDEERRRGKLTITTADVDGEDAGRSRSLSAMRRRQEKFRRSQVQETREKISREVVLPETITIQELSQRMSERAVDVIKYLMKEGQMMKPGDVIDADLAELIAGEFGHTVKRVSESDVELGIFNIADVEGDRVSRPPVVTIMGHVDHGKTSLLDAIRHANVVAGEAGGITQHIGAYQVEQNGQKITFIDTPGHAAFTAMRARGAQATDIAILVVAADDSVMPQTIESINHAKAAGVPIIVAINKIDKHEADPQKVRNQLLQHEVFVESMGGETLDVEVSAKTGKNLDKLLEAVLLQAEILDLKANPNRTAEGTVIEAQLDRGRGAVATVLVQNGTLKPGQIIVAGDVWGRVRALVNDKGEHMKEAPPAMPVEVLGLSGTPQAGDKFAVVESESRAREISEYRQRLARDKAAARQSGQRGSLEQMMTQMQSTGIKEFPLVIKGDVQGSIEAIAGALEKLGTDEVRARIVHLGAGGITESDISLAEASNAAIIGFNVRANAQARQFAERQGIEIRYYNIIYDLVDDVKAAMSGLLSPERRETFIGNAEILEVFNITKVGKVAGCRVVEGKVERGAGVRLIRNDVVVHEGKLKTLKRFKDEVSEVPMGQECGMAFENYEDMRVGDVIECFRVEHITRTL</sequence>
<dbReference type="EMBL" id="CP000133">
    <property type="protein sequence ID" value="ABC88941.1"/>
    <property type="molecule type" value="Genomic_DNA"/>
</dbReference>
<dbReference type="RefSeq" id="WP_011423511.1">
    <property type="nucleotide sequence ID" value="NC_007761.1"/>
</dbReference>
<dbReference type="SMR" id="Q2KDZ5"/>
<dbReference type="KEGG" id="ret:RHE_CH00116"/>
<dbReference type="eggNOG" id="COG0532">
    <property type="taxonomic scope" value="Bacteria"/>
</dbReference>
<dbReference type="HOGENOM" id="CLU_006301_10_0_5"/>
<dbReference type="OrthoDB" id="9811804at2"/>
<dbReference type="Proteomes" id="UP000001936">
    <property type="component" value="Chromosome"/>
</dbReference>
<dbReference type="GO" id="GO:0005829">
    <property type="term" value="C:cytosol"/>
    <property type="evidence" value="ECO:0007669"/>
    <property type="project" value="TreeGrafter"/>
</dbReference>
<dbReference type="GO" id="GO:0005525">
    <property type="term" value="F:GTP binding"/>
    <property type="evidence" value="ECO:0007669"/>
    <property type="project" value="UniProtKB-KW"/>
</dbReference>
<dbReference type="GO" id="GO:0003924">
    <property type="term" value="F:GTPase activity"/>
    <property type="evidence" value="ECO:0007669"/>
    <property type="project" value="UniProtKB-UniRule"/>
</dbReference>
<dbReference type="GO" id="GO:0097216">
    <property type="term" value="F:guanosine tetraphosphate binding"/>
    <property type="evidence" value="ECO:0007669"/>
    <property type="project" value="UniProtKB-ARBA"/>
</dbReference>
<dbReference type="GO" id="GO:0003743">
    <property type="term" value="F:translation initiation factor activity"/>
    <property type="evidence" value="ECO:0007669"/>
    <property type="project" value="UniProtKB-UniRule"/>
</dbReference>
<dbReference type="CDD" id="cd01887">
    <property type="entry name" value="IF2_eIF5B"/>
    <property type="match status" value="1"/>
</dbReference>
<dbReference type="CDD" id="cd03702">
    <property type="entry name" value="IF2_mtIF2_II"/>
    <property type="match status" value="1"/>
</dbReference>
<dbReference type="CDD" id="cd03692">
    <property type="entry name" value="mtIF2_IVc"/>
    <property type="match status" value="1"/>
</dbReference>
<dbReference type="FunFam" id="2.40.30.10:FF:000007">
    <property type="entry name" value="Translation initiation factor IF-2"/>
    <property type="match status" value="1"/>
</dbReference>
<dbReference type="FunFam" id="2.40.30.10:FF:000008">
    <property type="entry name" value="Translation initiation factor IF-2"/>
    <property type="match status" value="1"/>
</dbReference>
<dbReference type="FunFam" id="3.40.50.10050:FF:000001">
    <property type="entry name" value="Translation initiation factor IF-2"/>
    <property type="match status" value="1"/>
</dbReference>
<dbReference type="FunFam" id="3.40.50.300:FF:000019">
    <property type="entry name" value="Translation initiation factor IF-2"/>
    <property type="match status" value="1"/>
</dbReference>
<dbReference type="Gene3D" id="3.40.50.300">
    <property type="entry name" value="P-loop containing nucleotide triphosphate hydrolases"/>
    <property type="match status" value="1"/>
</dbReference>
<dbReference type="Gene3D" id="2.40.30.10">
    <property type="entry name" value="Translation factors"/>
    <property type="match status" value="2"/>
</dbReference>
<dbReference type="Gene3D" id="3.40.50.10050">
    <property type="entry name" value="Translation initiation factor IF- 2, domain 3"/>
    <property type="match status" value="1"/>
</dbReference>
<dbReference type="HAMAP" id="MF_00100_B">
    <property type="entry name" value="IF_2_B"/>
    <property type="match status" value="1"/>
</dbReference>
<dbReference type="InterPro" id="IPR053905">
    <property type="entry name" value="EF-G-like_DII"/>
</dbReference>
<dbReference type="InterPro" id="IPR004161">
    <property type="entry name" value="EFTu-like_2"/>
</dbReference>
<dbReference type="InterPro" id="IPR013575">
    <property type="entry name" value="IF2_assoc_dom_bac"/>
</dbReference>
<dbReference type="InterPro" id="IPR044145">
    <property type="entry name" value="IF2_II"/>
</dbReference>
<dbReference type="InterPro" id="IPR006847">
    <property type="entry name" value="IF2_N"/>
</dbReference>
<dbReference type="InterPro" id="IPR027417">
    <property type="entry name" value="P-loop_NTPase"/>
</dbReference>
<dbReference type="InterPro" id="IPR005225">
    <property type="entry name" value="Small_GTP-bd"/>
</dbReference>
<dbReference type="InterPro" id="IPR000795">
    <property type="entry name" value="T_Tr_GTP-bd_dom"/>
</dbReference>
<dbReference type="InterPro" id="IPR000178">
    <property type="entry name" value="TF_IF2_bacterial-like"/>
</dbReference>
<dbReference type="InterPro" id="IPR015760">
    <property type="entry name" value="TIF_IF2"/>
</dbReference>
<dbReference type="InterPro" id="IPR023115">
    <property type="entry name" value="TIF_IF2_dom3"/>
</dbReference>
<dbReference type="InterPro" id="IPR036925">
    <property type="entry name" value="TIF_IF2_dom3_sf"/>
</dbReference>
<dbReference type="InterPro" id="IPR009000">
    <property type="entry name" value="Transl_B-barrel_sf"/>
</dbReference>
<dbReference type="NCBIfam" id="TIGR00487">
    <property type="entry name" value="IF-2"/>
    <property type="match status" value="1"/>
</dbReference>
<dbReference type="NCBIfam" id="TIGR00231">
    <property type="entry name" value="small_GTP"/>
    <property type="match status" value="1"/>
</dbReference>
<dbReference type="PANTHER" id="PTHR43381:SF5">
    <property type="entry name" value="TR-TYPE G DOMAIN-CONTAINING PROTEIN"/>
    <property type="match status" value="1"/>
</dbReference>
<dbReference type="PANTHER" id="PTHR43381">
    <property type="entry name" value="TRANSLATION INITIATION FACTOR IF-2-RELATED"/>
    <property type="match status" value="1"/>
</dbReference>
<dbReference type="Pfam" id="PF22042">
    <property type="entry name" value="EF-G_D2"/>
    <property type="match status" value="1"/>
</dbReference>
<dbReference type="Pfam" id="PF00009">
    <property type="entry name" value="GTP_EFTU"/>
    <property type="match status" value="1"/>
</dbReference>
<dbReference type="Pfam" id="PF03144">
    <property type="entry name" value="GTP_EFTU_D2"/>
    <property type="match status" value="1"/>
</dbReference>
<dbReference type="Pfam" id="PF11987">
    <property type="entry name" value="IF-2"/>
    <property type="match status" value="1"/>
</dbReference>
<dbReference type="Pfam" id="PF08364">
    <property type="entry name" value="IF2_assoc"/>
    <property type="match status" value="1"/>
</dbReference>
<dbReference type="Pfam" id="PF04760">
    <property type="entry name" value="IF2_N"/>
    <property type="match status" value="1"/>
</dbReference>
<dbReference type="SUPFAM" id="SSF52156">
    <property type="entry name" value="Initiation factor IF2/eIF5b, domain 3"/>
    <property type="match status" value="1"/>
</dbReference>
<dbReference type="SUPFAM" id="SSF52540">
    <property type="entry name" value="P-loop containing nucleoside triphosphate hydrolases"/>
    <property type="match status" value="1"/>
</dbReference>
<dbReference type="SUPFAM" id="SSF50447">
    <property type="entry name" value="Translation proteins"/>
    <property type="match status" value="2"/>
</dbReference>
<dbReference type="PROSITE" id="PS51722">
    <property type="entry name" value="G_TR_2"/>
    <property type="match status" value="1"/>
</dbReference>
<dbReference type="PROSITE" id="PS01176">
    <property type="entry name" value="IF2"/>
    <property type="match status" value="1"/>
</dbReference>
<proteinExistence type="inferred from homology"/>
<comment type="function">
    <text evidence="2">One of the essential components for the initiation of protein synthesis. Protects formylmethionyl-tRNA from spontaneous hydrolysis and promotes its binding to the 30S ribosomal subunits. Also involved in the hydrolysis of GTP during the formation of the 70S ribosomal complex.</text>
</comment>
<comment type="subcellular location">
    <subcellularLocation>
        <location evidence="2">Cytoplasm</location>
    </subcellularLocation>
</comment>
<comment type="similarity">
    <text evidence="2">Belongs to the TRAFAC class translation factor GTPase superfamily. Classic translation factor GTPase family. IF-2 subfamily.</text>
</comment>
<feature type="chain" id="PRO_1000008311" description="Translation initiation factor IF-2">
    <location>
        <begin position="1"/>
        <end position="916"/>
    </location>
</feature>
<feature type="domain" description="tr-type G">
    <location>
        <begin position="414"/>
        <end position="581"/>
    </location>
</feature>
<feature type="region of interest" description="Disordered" evidence="3">
    <location>
        <begin position="1"/>
        <end position="325"/>
    </location>
</feature>
<feature type="region of interest" description="G1" evidence="1">
    <location>
        <begin position="423"/>
        <end position="430"/>
    </location>
</feature>
<feature type="region of interest" description="G2" evidence="1">
    <location>
        <begin position="448"/>
        <end position="452"/>
    </location>
</feature>
<feature type="region of interest" description="G3" evidence="1">
    <location>
        <begin position="469"/>
        <end position="472"/>
    </location>
</feature>
<feature type="region of interest" description="G4" evidence="1">
    <location>
        <begin position="523"/>
        <end position="526"/>
    </location>
</feature>
<feature type="region of interest" description="G5" evidence="1">
    <location>
        <begin position="559"/>
        <end position="561"/>
    </location>
</feature>
<feature type="compositionally biased region" description="Low complexity" evidence="3">
    <location>
        <begin position="60"/>
        <end position="91"/>
    </location>
</feature>
<feature type="compositionally biased region" description="Polar residues" evidence="3">
    <location>
        <begin position="97"/>
        <end position="108"/>
    </location>
</feature>
<feature type="compositionally biased region" description="Basic and acidic residues" evidence="3">
    <location>
        <begin position="125"/>
        <end position="182"/>
    </location>
</feature>
<feature type="compositionally biased region" description="Low complexity" evidence="3">
    <location>
        <begin position="183"/>
        <end position="209"/>
    </location>
</feature>
<feature type="compositionally biased region" description="Low complexity" evidence="3">
    <location>
        <begin position="229"/>
        <end position="243"/>
    </location>
</feature>
<feature type="binding site" evidence="2">
    <location>
        <begin position="423"/>
        <end position="430"/>
    </location>
    <ligand>
        <name>GTP</name>
        <dbReference type="ChEBI" id="CHEBI:37565"/>
    </ligand>
</feature>
<feature type="binding site" evidence="2">
    <location>
        <begin position="469"/>
        <end position="473"/>
    </location>
    <ligand>
        <name>GTP</name>
        <dbReference type="ChEBI" id="CHEBI:37565"/>
    </ligand>
</feature>
<feature type="binding site" evidence="2">
    <location>
        <begin position="523"/>
        <end position="526"/>
    </location>
    <ligand>
        <name>GTP</name>
        <dbReference type="ChEBI" id="CHEBI:37565"/>
    </ligand>
</feature>
<reference key="1">
    <citation type="journal article" date="2006" name="Proc. Natl. Acad. Sci. U.S.A.">
        <title>The partitioned Rhizobium etli genome: genetic and metabolic redundancy in seven interacting replicons.</title>
        <authorList>
            <person name="Gonzalez V."/>
            <person name="Santamaria R.I."/>
            <person name="Bustos P."/>
            <person name="Hernandez-Gonzalez I."/>
            <person name="Medrano-Soto A."/>
            <person name="Moreno-Hagelsieb G."/>
            <person name="Janga S.C."/>
            <person name="Ramirez M.A."/>
            <person name="Jimenez-Jacinto V."/>
            <person name="Collado-Vides J."/>
            <person name="Davila G."/>
        </authorList>
    </citation>
    <scope>NUCLEOTIDE SEQUENCE [LARGE SCALE GENOMIC DNA]</scope>
    <source>
        <strain>ATCC 51251 / DSM 11541 / JCM 21823 / NBRC 15573 / CFN 42</strain>
    </source>
</reference>
<evidence type="ECO:0000250" key="1"/>
<evidence type="ECO:0000255" key="2">
    <source>
        <dbReference type="HAMAP-Rule" id="MF_00100"/>
    </source>
</evidence>
<evidence type="ECO:0000256" key="3">
    <source>
        <dbReference type="SAM" id="MobiDB-lite"/>
    </source>
</evidence>
<gene>
    <name evidence="2" type="primary">infB</name>
    <name type="ordered locus">RHE_CH00116</name>
</gene>
<protein>
    <recommendedName>
        <fullName evidence="2">Translation initiation factor IF-2</fullName>
    </recommendedName>
</protein>
<accession>Q2KDZ5</accession>
<organism>
    <name type="scientific">Rhizobium etli (strain ATCC 51251 / DSM 11541 / JCM 21823 / NBRC 15573 / CFN 42)</name>
    <dbReference type="NCBI Taxonomy" id="347834"/>
    <lineage>
        <taxon>Bacteria</taxon>
        <taxon>Pseudomonadati</taxon>
        <taxon>Pseudomonadota</taxon>
        <taxon>Alphaproteobacteria</taxon>
        <taxon>Hyphomicrobiales</taxon>
        <taxon>Rhizobiaceae</taxon>
        <taxon>Rhizobium/Agrobacterium group</taxon>
        <taxon>Rhizobium</taxon>
    </lineage>
</organism>
<name>IF2_RHIEC</name>
<keyword id="KW-0963">Cytoplasm</keyword>
<keyword id="KW-0342">GTP-binding</keyword>
<keyword id="KW-0396">Initiation factor</keyword>
<keyword id="KW-0547">Nucleotide-binding</keyword>
<keyword id="KW-0648">Protein biosynthesis</keyword>
<keyword id="KW-1185">Reference proteome</keyword>